<feature type="chain" id="PRO_1000021780" description="Adenylate kinase">
    <location>
        <begin position="1"/>
        <end position="215"/>
    </location>
</feature>
<feature type="region of interest" description="NMP" evidence="1">
    <location>
        <begin position="30"/>
        <end position="59"/>
    </location>
</feature>
<feature type="region of interest" description="LID" evidence="1">
    <location>
        <begin position="122"/>
        <end position="159"/>
    </location>
</feature>
<feature type="binding site" evidence="1">
    <location>
        <begin position="10"/>
        <end position="15"/>
    </location>
    <ligand>
        <name>ATP</name>
        <dbReference type="ChEBI" id="CHEBI:30616"/>
    </ligand>
</feature>
<feature type="binding site" evidence="1">
    <location>
        <position position="31"/>
    </location>
    <ligand>
        <name>AMP</name>
        <dbReference type="ChEBI" id="CHEBI:456215"/>
    </ligand>
</feature>
<feature type="binding site" evidence="1">
    <location>
        <position position="36"/>
    </location>
    <ligand>
        <name>AMP</name>
        <dbReference type="ChEBI" id="CHEBI:456215"/>
    </ligand>
</feature>
<feature type="binding site" evidence="1">
    <location>
        <begin position="57"/>
        <end position="59"/>
    </location>
    <ligand>
        <name>AMP</name>
        <dbReference type="ChEBI" id="CHEBI:456215"/>
    </ligand>
</feature>
<feature type="binding site" evidence="1">
    <location>
        <begin position="85"/>
        <end position="88"/>
    </location>
    <ligand>
        <name>AMP</name>
        <dbReference type="ChEBI" id="CHEBI:456215"/>
    </ligand>
</feature>
<feature type="binding site" evidence="1">
    <location>
        <position position="92"/>
    </location>
    <ligand>
        <name>AMP</name>
        <dbReference type="ChEBI" id="CHEBI:456215"/>
    </ligand>
</feature>
<feature type="binding site" evidence="1">
    <location>
        <position position="123"/>
    </location>
    <ligand>
        <name>ATP</name>
        <dbReference type="ChEBI" id="CHEBI:30616"/>
    </ligand>
</feature>
<feature type="binding site" evidence="1">
    <location>
        <begin position="132"/>
        <end position="133"/>
    </location>
    <ligand>
        <name>ATP</name>
        <dbReference type="ChEBI" id="CHEBI:30616"/>
    </ligand>
</feature>
<feature type="binding site" evidence="1">
    <location>
        <position position="156"/>
    </location>
    <ligand>
        <name>AMP</name>
        <dbReference type="ChEBI" id="CHEBI:456215"/>
    </ligand>
</feature>
<feature type="binding site" evidence="1">
    <location>
        <position position="167"/>
    </location>
    <ligand>
        <name>AMP</name>
        <dbReference type="ChEBI" id="CHEBI:456215"/>
    </ligand>
</feature>
<feature type="binding site" evidence="1">
    <location>
        <position position="201"/>
    </location>
    <ligand>
        <name>ATP</name>
        <dbReference type="ChEBI" id="CHEBI:30616"/>
    </ligand>
</feature>
<gene>
    <name evidence="1" type="primary">adk</name>
    <name type="ordered locus">Tcr_2058</name>
</gene>
<accession>Q31DX5</accession>
<protein>
    <recommendedName>
        <fullName evidence="1">Adenylate kinase</fullName>
        <shortName evidence="1">AK</shortName>
        <ecNumber evidence="1">2.7.4.3</ecNumber>
    </recommendedName>
    <alternativeName>
        <fullName evidence="1">ATP-AMP transphosphorylase</fullName>
    </alternativeName>
    <alternativeName>
        <fullName evidence="1">ATP:AMP phosphotransferase</fullName>
    </alternativeName>
    <alternativeName>
        <fullName evidence="1">Adenylate monophosphate kinase</fullName>
    </alternativeName>
</protein>
<reference key="1">
    <citation type="journal article" date="2006" name="PLoS Biol.">
        <title>The genome of deep-sea vent chemolithoautotroph Thiomicrospira crunogena XCL-2.</title>
        <authorList>
            <person name="Scott K.M."/>
            <person name="Sievert S.M."/>
            <person name="Abril F.N."/>
            <person name="Ball L.A."/>
            <person name="Barrett C.J."/>
            <person name="Blake R.A."/>
            <person name="Boller A.J."/>
            <person name="Chain P.S.G."/>
            <person name="Clark J.A."/>
            <person name="Davis C.R."/>
            <person name="Detter C."/>
            <person name="Do K.F."/>
            <person name="Dobrinski K.P."/>
            <person name="Faza B.I."/>
            <person name="Fitzpatrick K.A."/>
            <person name="Freyermuth S.K."/>
            <person name="Harmer T.L."/>
            <person name="Hauser L.J."/>
            <person name="Huegler M."/>
            <person name="Kerfeld C.A."/>
            <person name="Klotz M.G."/>
            <person name="Kong W.W."/>
            <person name="Land M."/>
            <person name="Lapidus A."/>
            <person name="Larimer F.W."/>
            <person name="Longo D.L."/>
            <person name="Lucas S."/>
            <person name="Malfatti S.A."/>
            <person name="Massey S.E."/>
            <person name="Martin D.D."/>
            <person name="McCuddin Z."/>
            <person name="Meyer F."/>
            <person name="Moore J.L."/>
            <person name="Ocampo L.H. Jr."/>
            <person name="Paul J.H."/>
            <person name="Paulsen I.T."/>
            <person name="Reep D.K."/>
            <person name="Ren Q."/>
            <person name="Ross R.L."/>
            <person name="Sato P.Y."/>
            <person name="Thomas P."/>
            <person name="Tinkham L.E."/>
            <person name="Zeruth G.T."/>
        </authorList>
    </citation>
    <scope>NUCLEOTIDE SEQUENCE [LARGE SCALE GENOMIC DNA]</scope>
    <source>
        <strain>DSM 25203 / XCL-2</strain>
    </source>
</reference>
<proteinExistence type="inferred from homology"/>
<comment type="function">
    <text evidence="1">Catalyzes the reversible transfer of the terminal phosphate group between ATP and AMP. Plays an important role in cellular energy homeostasis and in adenine nucleotide metabolism.</text>
</comment>
<comment type="catalytic activity">
    <reaction evidence="1">
        <text>AMP + ATP = 2 ADP</text>
        <dbReference type="Rhea" id="RHEA:12973"/>
        <dbReference type="ChEBI" id="CHEBI:30616"/>
        <dbReference type="ChEBI" id="CHEBI:456215"/>
        <dbReference type="ChEBI" id="CHEBI:456216"/>
        <dbReference type="EC" id="2.7.4.3"/>
    </reaction>
</comment>
<comment type="pathway">
    <text evidence="1">Purine metabolism; AMP biosynthesis via salvage pathway; AMP from ADP: step 1/1.</text>
</comment>
<comment type="subunit">
    <text evidence="1">Monomer.</text>
</comment>
<comment type="subcellular location">
    <subcellularLocation>
        <location evidence="1">Cytoplasm</location>
    </subcellularLocation>
</comment>
<comment type="domain">
    <text evidence="1">Consists of three domains, a large central CORE domain and two small peripheral domains, NMPbind and LID, which undergo movements during catalysis. The LID domain closes over the site of phosphoryl transfer upon ATP binding. Assembling and dissambling the active center during each catalytic cycle provides an effective means to prevent ATP hydrolysis.</text>
</comment>
<comment type="similarity">
    <text evidence="1">Belongs to the adenylate kinase family.</text>
</comment>
<name>KAD_HYDCU</name>
<sequence length="215" mass="23611">MKFILLGAPGAGKGTQAQFLTKEFNIPQISTGDMLRAAIKAQTPMGKMAKEFMDAGKLVTDEIIIGLVKDRIAEPDCANGFLLDGFPRTVPQADALKAAGVEIDAVIEIDVPDSEIVNRMAGRRVHPASGRTYHITYNPPKVDDKDNETGDDLIQREDDKAEVVLDRLKVYHEQTAPLIGYYKAEAEKNDQLKYIQVDGTQPIDTVEKSILSALK</sequence>
<dbReference type="EC" id="2.7.4.3" evidence="1"/>
<dbReference type="EMBL" id="CP000109">
    <property type="protein sequence ID" value="ABB42648.1"/>
    <property type="molecule type" value="Genomic_DNA"/>
</dbReference>
<dbReference type="SMR" id="Q31DX5"/>
<dbReference type="STRING" id="317025.Tcr_2058"/>
<dbReference type="KEGG" id="tcx:Tcr_2058"/>
<dbReference type="eggNOG" id="COG0563">
    <property type="taxonomic scope" value="Bacteria"/>
</dbReference>
<dbReference type="HOGENOM" id="CLU_032354_1_2_6"/>
<dbReference type="OrthoDB" id="9805030at2"/>
<dbReference type="UniPathway" id="UPA00588">
    <property type="reaction ID" value="UER00649"/>
</dbReference>
<dbReference type="GO" id="GO:0005737">
    <property type="term" value="C:cytoplasm"/>
    <property type="evidence" value="ECO:0007669"/>
    <property type="project" value="UniProtKB-SubCell"/>
</dbReference>
<dbReference type="GO" id="GO:0004017">
    <property type="term" value="F:adenylate kinase activity"/>
    <property type="evidence" value="ECO:0007669"/>
    <property type="project" value="UniProtKB-UniRule"/>
</dbReference>
<dbReference type="GO" id="GO:0005524">
    <property type="term" value="F:ATP binding"/>
    <property type="evidence" value="ECO:0007669"/>
    <property type="project" value="UniProtKB-UniRule"/>
</dbReference>
<dbReference type="GO" id="GO:0044209">
    <property type="term" value="P:AMP salvage"/>
    <property type="evidence" value="ECO:0007669"/>
    <property type="project" value="UniProtKB-UniRule"/>
</dbReference>
<dbReference type="CDD" id="cd01428">
    <property type="entry name" value="ADK"/>
    <property type="match status" value="1"/>
</dbReference>
<dbReference type="FunFam" id="3.40.50.300:FF:000106">
    <property type="entry name" value="Adenylate kinase mitochondrial"/>
    <property type="match status" value="1"/>
</dbReference>
<dbReference type="Gene3D" id="3.40.50.300">
    <property type="entry name" value="P-loop containing nucleotide triphosphate hydrolases"/>
    <property type="match status" value="1"/>
</dbReference>
<dbReference type="HAMAP" id="MF_00235">
    <property type="entry name" value="Adenylate_kinase_Adk"/>
    <property type="match status" value="1"/>
</dbReference>
<dbReference type="InterPro" id="IPR006259">
    <property type="entry name" value="Adenyl_kin_sub"/>
</dbReference>
<dbReference type="InterPro" id="IPR000850">
    <property type="entry name" value="Adenylat/UMP-CMP_kin"/>
</dbReference>
<dbReference type="InterPro" id="IPR033690">
    <property type="entry name" value="Adenylat_kinase_CS"/>
</dbReference>
<dbReference type="InterPro" id="IPR007862">
    <property type="entry name" value="Adenylate_kinase_lid-dom"/>
</dbReference>
<dbReference type="InterPro" id="IPR027417">
    <property type="entry name" value="P-loop_NTPase"/>
</dbReference>
<dbReference type="NCBIfam" id="TIGR01351">
    <property type="entry name" value="adk"/>
    <property type="match status" value="1"/>
</dbReference>
<dbReference type="NCBIfam" id="NF001379">
    <property type="entry name" value="PRK00279.1-1"/>
    <property type="match status" value="1"/>
</dbReference>
<dbReference type="NCBIfam" id="NF001380">
    <property type="entry name" value="PRK00279.1-2"/>
    <property type="match status" value="1"/>
</dbReference>
<dbReference type="NCBIfam" id="NF001381">
    <property type="entry name" value="PRK00279.1-3"/>
    <property type="match status" value="1"/>
</dbReference>
<dbReference type="PANTHER" id="PTHR23359">
    <property type="entry name" value="NUCLEOTIDE KINASE"/>
    <property type="match status" value="1"/>
</dbReference>
<dbReference type="Pfam" id="PF00406">
    <property type="entry name" value="ADK"/>
    <property type="match status" value="1"/>
</dbReference>
<dbReference type="Pfam" id="PF05191">
    <property type="entry name" value="ADK_lid"/>
    <property type="match status" value="1"/>
</dbReference>
<dbReference type="PRINTS" id="PR00094">
    <property type="entry name" value="ADENYLTKNASE"/>
</dbReference>
<dbReference type="SUPFAM" id="SSF52540">
    <property type="entry name" value="P-loop containing nucleoside triphosphate hydrolases"/>
    <property type="match status" value="1"/>
</dbReference>
<dbReference type="PROSITE" id="PS00113">
    <property type="entry name" value="ADENYLATE_KINASE"/>
    <property type="match status" value="1"/>
</dbReference>
<organism>
    <name type="scientific">Hydrogenovibrio crunogenus (strain DSM 25203 / XCL-2)</name>
    <name type="common">Thiomicrospira crunogena</name>
    <dbReference type="NCBI Taxonomy" id="317025"/>
    <lineage>
        <taxon>Bacteria</taxon>
        <taxon>Pseudomonadati</taxon>
        <taxon>Pseudomonadota</taxon>
        <taxon>Gammaproteobacteria</taxon>
        <taxon>Thiotrichales</taxon>
        <taxon>Piscirickettsiaceae</taxon>
        <taxon>Hydrogenovibrio</taxon>
    </lineage>
</organism>
<keyword id="KW-0067">ATP-binding</keyword>
<keyword id="KW-0963">Cytoplasm</keyword>
<keyword id="KW-0418">Kinase</keyword>
<keyword id="KW-0545">Nucleotide biosynthesis</keyword>
<keyword id="KW-0547">Nucleotide-binding</keyword>
<keyword id="KW-0808">Transferase</keyword>
<evidence type="ECO:0000255" key="1">
    <source>
        <dbReference type="HAMAP-Rule" id="MF_00235"/>
    </source>
</evidence>